<accession>Q9CNL6</accession>
<dbReference type="EC" id="5.6.2.3" evidence="1"/>
<dbReference type="EMBL" id="AE004439">
    <property type="protein sequence ID" value="AAK02496.1"/>
    <property type="molecule type" value="Genomic_DNA"/>
</dbReference>
<dbReference type="RefSeq" id="WP_005726119.1">
    <property type="nucleotide sequence ID" value="NC_002663.1"/>
</dbReference>
<dbReference type="SMR" id="Q9CNL6"/>
<dbReference type="STRING" id="272843.PM0412"/>
<dbReference type="EnsemblBacteria" id="AAK02496">
    <property type="protein sequence ID" value="AAK02496"/>
    <property type="gene ID" value="PM0412"/>
</dbReference>
<dbReference type="KEGG" id="pmu:PM0412"/>
<dbReference type="HOGENOM" id="CLU_005373_0_0_6"/>
<dbReference type="OrthoDB" id="9773982at2"/>
<dbReference type="Proteomes" id="UP000000809">
    <property type="component" value="Chromosome"/>
</dbReference>
<dbReference type="GO" id="GO:0005829">
    <property type="term" value="C:cytosol"/>
    <property type="evidence" value="ECO:0007669"/>
    <property type="project" value="TreeGrafter"/>
</dbReference>
<dbReference type="GO" id="GO:1990077">
    <property type="term" value="C:primosome complex"/>
    <property type="evidence" value="ECO:0007669"/>
    <property type="project" value="UniProtKB-KW"/>
</dbReference>
<dbReference type="GO" id="GO:0005524">
    <property type="term" value="F:ATP binding"/>
    <property type="evidence" value="ECO:0007669"/>
    <property type="project" value="UniProtKB-KW"/>
</dbReference>
<dbReference type="GO" id="GO:0016887">
    <property type="term" value="F:ATP hydrolysis activity"/>
    <property type="evidence" value="ECO:0007669"/>
    <property type="project" value="InterPro"/>
</dbReference>
<dbReference type="GO" id="GO:0003677">
    <property type="term" value="F:DNA binding"/>
    <property type="evidence" value="ECO:0007669"/>
    <property type="project" value="UniProtKB-KW"/>
</dbReference>
<dbReference type="GO" id="GO:0003678">
    <property type="term" value="F:DNA helicase activity"/>
    <property type="evidence" value="ECO:0007669"/>
    <property type="project" value="InterPro"/>
</dbReference>
<dbReference type="GO" id="GO:0006269">
    <property type="term" value="P:DNA replication, synthesis of primer"/>
    <property type="evidence" value="ECO:0007669"/>
    <property type="project" value="UniProtKB-KW"/>
</dbReference>
<dbReference type="CDD" id="cd00984">
    <property type="entry name" value="DnaB_C"/>
    <property type="match status" value="1"/>
</dbReference>
<dbReference type="FunFam" id="1.10.860.10:FF:000001">
    <property type="entry name" value="Replicative DNA helicase"/>
    <property type="match status" value="1"/>
</dbReference>
<dbReference type="FunFam" id="3.40.50.300:FF:000076">
    <property type="entry name" value="Replicative DNA helicase"/>
    <property type="match status" value="1"/>
</dbReference>
<dbReference type="Gene3D" id="1.10.860.10">
    <property type="entry name" value="DNAb Helicase, Chain A"/>
    <property type="match status" value="1"/>
</dbReference>
<dbReference type="Gene3D" id="3.40.50.300">
    <property type="entry name" value="P-loop containing nucleotide triphosphate hydrolases"/>
    <property type="match status" value="1"/>
</dbReference>
<dbReference type="InterPro" id="IPR003593">
    <property type="entry name" value="AAA+_ATPase"/>
</dbReference>
<dbReference type="InterPro" id="IPR036185">
    <property type="entry name" value="DNA_heli_DnaB-like_N_sf"/>
</dbReference>
<dbReference type="InterPro" id="IPR007692">
    <property type="entry name" value="DNA_helicase_DnaB"/>
</dbReference>
<dbReference type="InterPro" id="IPR007694">
    <property type="entry name" value="DNA_helicase_DnaB-like_C"/>
</dbReference>
<dbReference type="InterPro" id="IPR007693">
    <property type="entry name" value="DNA_helicase_DnaB-like_N"/>
</dbReference>
<dbReference type="InterPro" id="IPR016136">
    <property type="entry name" value="DNA_helicase_N/primase_C"/>
</dbReference>
<dbReference type="InterPro" id="IPR027417">
    <property type="entry name" value="P-loop_NTPase"/>
</dbReference>
<dbReference type="NCBIfam" id="TIGR00665">
    <property type="entry name" value="DnaB"/>
    <property type="match status" value="1"/>
</dbReference>
<dbReference type="NCBIfam" id="NF004384">
    <property type="entry name" value="PRK05748.1"/>
    <property type="match status" value="1"/>
</dbReference>
<dbReference type="NCBIfam" id="NF005369">
    <property type="entry name" value="PRK06904.1"/>
    <property type="match status" value="1"/>
</dbReference>
<dbReference type="PANTHER" id="PTHR30153:SF2">
    <property type="entry name" value="REPLICATIVE DNA HELICASE"/>
    <property type="match status" value="1"/>
</dbReference>
<dbReference type="PANTHER" id="PTHR30153">
    <property type="entry name" value="REPLICATIVE DNA HELICASE DNAB"/>
    <property type="match status" value="1"/>
</dbReference>
<dbReference type="Pfam" id="PF00772">
    <property type="entry name" value="DnaB"/>
    <property type="match status" value="1"/>
</dbReference>
<dbReference type="Pfam" id="PF03796">
    <property type="entry name" value="DnaB_C"/>
    <property type="match status" value="1"/>
</dbReference>
<dbReference type="SMART" id="SM00382">
    <property type="entry name" value="AAA"/>
    <property type="match status" value="1"/>
</dbReference>
<dbReference type="SUPFAM" id="SSF48024">
    <property type="entry name" value="N-terminal domain of DnaB helicase"/>
    <property type="match status" value="1"/>
</dbReference>
<dbReference type="SUPFAM" id="SSF52540">
    <property type="entry name" value="P-loop containing nucleoside triphosphate hydrolases"/>
    <property type="match status" value="1"/>
</dbReference>
<dbReference type="PROSITE" id="PS51199">
    <property type="entry name" value="SF4_HELICASE"/>
    <property type="match status" value="1"/>
</dbReference>
<gene>
    <name type="primary">dnaB</name>
    <name type="ordered locus">PM0412</name>
</gene>
<keyword id="KW-0067">ATP-binding</keyword>
<keyword id="KW-0235">DNA replication</keyword>
<keyword id="KW-0238">DNA-binding</keyword>
<keyword id="KW-0347">Helicase</keyword>
<keyword id="KW-0378">Hydrolase</keyword>
<keyword id="KW-0413">Isomerase</keyword>
<keyword id="KW-0547">Nucleotide-binding</keyword>
<keyword id="KW-0639">Primosome</keyword>
<keyword id="KW-1185">Reference proteome</keyword>
<proteinExistence type="inferred from homology"/>
<protein>
    <recommendedName>
        <fullName>Replicative DNA helicase DnaB</fullName>
        <ecNumber evidence="1">5.6.2.3</ecNumber>
    </recommendedName>
    <alternativeName>
        <fullName evidence="3">DNA 5'-3' helicase DnaB</fullName>
    </alternativeName>
</protein>
<evidence type="ECO:0000250" key="1">
    <source>
        <dbReference type="UniProtKB" id="P0ACB0"/>
    </source>
</evidence>
<evidence type="ECO:0000255" key="2">
    <source>
        <dbReference type="PROSITE-ProRule" id="PRU00596"/>
    </source>
</evidence>
<evidence type="ECO:0000305" key="3"/>
<comment type="function">
    <text evidence="1">The main replicative DNA helicase, it participates in initiation and elongation during chromosome replication. Travels ahead of the DNA replisome, separating dsDNA into templates for DNA synthesis. A processive ATP-dependent 5'-3' DNA helicase it has DNA-dependent ATPase activity.</text>
</comment>
<comment type="catalytic activity">
    <reaction evidence="1">
        <text>Couples ATP hydrolysis with the unwinding of duplex DNA at the replication fork by translocating in the 5'-3' direction. This creates two antiparallel DNA single strands (ssDNA). The leading ssDNA polymer is the template for DNA polymerase III holoenzyme which synthesizes a continuous strand.</text>
        <dbReference type="EC" id="5.6.2.3"/>
    </reaction>
</comment>
<comment type="catalytic activity">
    <reaction evidence="1">
        <text>ATP + H2O = ADP + phosphate + H(+)</text>
        <dbReference type="Rhea" id="RHEA:13065"/>
        <dbReference type="ChEBI" id="CHEBI:15377"/>
        <dbReference type="ChEBI" id="CHEBI:15378"/>
        <dbReference type="ChEBI" id="CHEBI:30616"/>
        <dbReference type="ChEBI" id="CHEBI:43474"/>
        <dbReference type="ChEBI" id="CHEBI:456216"/>
        <dbReference type="EC" id="5.6.2.3"/>
    </reaction>
</comment>
<comment type="subunit">
    <text evidence="1">Homohexamer.</text>
</comment>
<comment type="similarity">
    <text evidence="3">Belongs to the helicase family. DnaB subfamily.</text>
</comment>
<reference key="1">
    <citation type="journal article" date="2001" name="Proc. Natl. Acad. Sci. U.S.A.">
        <title>Complete genomic sequence of Pasteurella multocida Pm70.</title>
        <authorList>
            <person name="May B.J."/>
            <person name="Zhang Q."/>
            <person name="Li L.L."/>
            <person name="Paustian M.L."/>
            <person name="Whittam T.S."/>
            <person name="Kapur V."/>
        </authorList>
    </citation>
    <scope>NUCLEOTIDE SEQUENCE [LARGE SCALE GENOMIC DNA]</scope>
    <source>
        <strain>Pm70</strain>
    </source>
</reference>
<name>DNAB_PASMU</name>
<sequence>MAKKNAQIPSKPLEQGIVPPHSLEAEQSVLGGILIHPAHWDSISDMLIADDFYLAAHRVIFQEMENLLRQGKPIDLINLYEFLREKNLSEDVGGFAYLAELSKNTPSVSNIVSYAAIVRDRAILRDLISVSNDVAQSCYTTKGMEVKDILDEAERKVFAISEKRTTSNEGPQNICAILEKTIDRIELLSKTEGHNGITGVSTGFDALDKKTAGLQPSDLIIVAARPSMGKTTFAMNLCENAALKSDKPVLVFSLEMPAEQIMMRSLASLSRVDQTKIRTGQGLDQSDWSKIGSTMGLFANKPNLYIDDSSGLTPTELRSRARRVYRENGGLSLIMVDYLQLMRAPGFADNRTLEIAEISRSLKALAKELEVPVIALSQLNRTLENRADKRPVNSDLRESGSIEQDADLIMFIYRDEVYNENSEDKGVAEIIIGKQRNGPIGRVRLAFRGQFSRFDNLAEQRDIRDDY</sequence>
<organism>
    <name type="scientific">Pasteurella multocida (strain Pm70)</name>
    <dbReference type="NCBI Taxonomy" id="272843"/>
    <lineage>
        <taxon>Bacteria</taxon>
        <taxon>Pseudomonadati</taxon>
        <taxon>Pseudomonadota</taxon>
        <taxon>Gammaproteobacteria</taxon>
        <taxon>Pasteurellales</taxon>
        <taxon>Pasteurellaceae</taxon>
        <taxon>Pasteurella</taxon>
    </lineage>
</organism>
<feature type="chain" id="PRO_0000102027" description="Replicative DNA helicase DnaB">
    <location>
        <begin position="1"/>
        <end position="467"/>
    </location>
</feature>
<feature type="domain" description="SF4 helicase" evidence="2">
    <location>
        <begin position="193"/>
        <end position="461"/>
    </location>
</feature>
<feature type="binding site" evidence="2">
    <location>
        <begin position="224"/>
        <end position="231"/>
    </location>
    <ligand>
        <name>ATP</name>
        <dbReference type="ChEBI" id="CHEBI:30616"/>
    </ligand>
</feature>